<reference key="1">
    <citation type="journal article" date="2009" name="PLoS ONE">
        <title>The complete genome of Teredinibacter turnerae T7901: an intracellular endosymbiont of marine wood-boring bivalves (shipworms).</title>
        <authorList>
            <person name="Yang J.C."/>
            <person name="Madupu R."/>
            <person name="Durkin A.S."/>
            <person name="Ekborg N.A."/>
            <person name="Pedamallu C.S."/>
            <person name="Hostetler J.B."/>
            <person name="Radune D."/>
            <person name="Toms B.S."/>
            <person name="Henrissat B."/>
            <person name="Coutinho P.M."/>
            <person name="Schwarz S."/>
            <person name="Field L."/>
            <person name="Trindade-Silva A.E."/>
            <person name="Soares C.A.G."/>
            <person name="Elshahawi S."/>
            <person name="Hanora A."/>
            <person name="Schmidt E.W."/>
            <person name="Haygood M.G."/>
            <person name="Posfai J."/>
            <person name="Benner J."/>
            <person name="Madinger C."/>
            <person name="Nove J."/>
            <person name="Anton B."/>
            <person name="Chaudhary K."/>
            <person name="Foster J."/>
            <person name="Holman A."/>
            <person name="Kumar S."/>
            <person name="Lessard P.A."/>
            <person name="Luyten Y.A."/>
            <person name="Slatko B."/>
            <person name="Wood N."/>
            <person name="Wu B."/>
            <person name="Teplitski M."/>
            <person name="Mougous J.D."/>
            <person name="Ward N."/>
            <person name="Eisen J.A."/>
            <person name="Badger J.H."/>
            <person name="Distel D.L."/>
        </authorList>
    </citation>
    <scope>NUCLEOTIDE SEQUENCE [LARGE SCALE GENOMIC DNA]</scope>
    <source>
        <strain>ATCC 39867 / T7901</strain>
    </source>
</reference>
<proteinExistence type="inferred from homology"/>
<protein>
    <recommendedName>
        <fullName evidence="1">Ribosomal protein L11 methyltransferase</fullName>
        <shortName evidence="1">L11 Mtase</shortName>
        <ecNumber evidence="1">2.1.1.-</ecNumber>
    </recommendedName>
</protein>
<sequence>MPWLQLRINTTRELAPRVEYAMAKSGSLAVTLQDNADHPIFEPALGETPLWQETRIVGLFEADTDTTAILELVLKKSGLSEAQHQWHILEDKDWEREWMTHYQPIQCGPGFWICPSWTAPPDPQAVNLMLDPGLAFGTGTHPTTFLCLQWLAGENLANKTVIDYGCGSGILGIGALLLGAVSVTGTDIDPQALMATQENVKRNNLPAESFPVYFPDKCPENPVDIVLANILAGPLVELAPALSALLKPGGRLCLSGVLETQKDDLLAAYEPTVEIEQVFQREEWICITGTRRALKSAKE</sequence>
<gene>
    <name evidence="1" type="primary">prmA</name>
    <name type="ordered locus">TERTU_3081</name>
</gene>
<dbReference type="EC" id="2.1.1.-" evidence="1"/>
<dbReference type="EMBL" id="CP001614">
    <property type="protein sequence ID" value="ACR12285.1"/>
    <property type="molecule type" value="Genomic_DNA"/>
</dbReference>
<dbReference type="RefSeq" id="WP_015818397.1">
    <property type="nucleotide sequence ID" value="NC_012997.1"/>
</dbReference>
<dbReference type="SMR" id="C5BP64"/>
<dbReference type="STRING" id="377629.TERTU_3081"/>
<dbReference type="KEGG" id="ttu:TERTU_3081"/>
<dbReference type="eggNOG" id="COG2264">
    <property type="taxonomic scope" value="Bacteria"/>
</dbReference>
<dbReference type="HOGENOM" id="CLU_049382_4_1_6"/>
<dbReference type="OrthoDB" id="9785995at2"/>
<dbReference type="Proteomes" id="UP000009080">
    <property type="component" value="Chromosome"/>
</dbReference>
<dbReference type="GO" id="GO:0005829">
    <property type="term" value="C:cytosol"/>
    <property type="evidence" value="ECO:0007669"/>
    <property type="project" value="TreeGrafter"/>
</dbReference>
<dbReference type="GO" id="GO:0016279">
    <property type="term" value="F:protein-lysine N-methyltransferase activity"/>
    <property type="evidence" value="ECO:0007669"/>
    <property type="project" value="TreeGrafter"/>
</dbReference>
<dbReference type="GO" id="GO:0032259">
    <property type="term" value="P:methylation"/>
    <property type="evidence" value="ECO:0007669"/>
    <property type="project" value="UniProtKB-KW"/>
</dbReference>
<dbReference type="CDD" id="cd02440">
    <property type="entry name" value="AdoMet_MTases"/>
    <property type="match status" value="1"/>
</dbReference>
<dbReference type="Gene3D" id="3.40.50.150">
    <property type="entry name" value="Vaccinia Virus protein VP39"/>
    <property type="match status" value="1"/>
</dbReference>
<dbReference type="HAMAP" id="MF_00735">
    <property type="entry name" value="Methyltr_PrmA"/>
    <property type="match status" value="1"/>
</dbReference>
<dbReference type="InterPro" id="IPR050078">
    <property type="entry name" value="Ribosomal_L11_MeTrfase_PrmA"/>
</dbReference>
<dbReference type="InterPro" id="IPR004498">
    <property type="entry name" value="Ribosomal_PrmA_MeTrfase"/>
</dbReference>
<dbReference type="InterPro" id="IPR029063">
    <property type="entry name" value="SAM-dependent_MTases_sf"/>
</dbReference>
<dbReference type="NCBIfam" id="TIGR00406">
    <property type="entry name" value="prmA"/>
    <property type="match status" value="1"/>
</dbReference>
<dbReference type="PANTHER" id="PTHR43648">
    <property type="entry name" value="ELECTRON TRANSFER FLAVOPROTEIN BETA SUBUNIT LYSINE METHYLTRANSFERASE"/>
    <property type="match status" value="1"/>
</dbReference>
<dbReference type="PANTHER" id="PTHR43648:SF1">
    <property type="entry name" value="ELECTRON TRANSFER FLAVOPROTEIN BETA SUBUNIT LYSINE METHYLTRANSFERASE"/>
    <property type="match status" value="1"/>
</dbReference>
<dbReference type="Pfam" id="PF06325">
    <property type="entry name" value="PrmA"/>
    <property type="match status" value="1"/>
</dbReference>
<dbReference type="PIRSF" id="PIRSF000401">
    <property type="entry name" value="RPL11_MTase"/>
    <property type="match status" value="1"/>
</dbReference>
<dbReference type="SUPFAM" id="SSF53335">
    <property type="entry name" value="S-adenosyl-L-methionine-dependent methyltransferases"/>
    <property type="match status" value="1"/>
</dbReference>
<accession>C5BP64</accession>
<comment type="function">
    <text evidence="1">Methylates ribosomal protein L11.</text>
</comment>
<comment type="catalytic activity">
    <reaction evidence="1">
        <text>L-lysyl-[protein] + 3 S-adenosyl-L-methionine = N(6),N(6),N(6)-trimethyl-L-lysyl-[protein] + 3 S-adenosyl-L-homocysteine + 3 H(+)</text>
        <dbReference type="Rhea" id="RHEA:54192"/>
        <dbReference type="Rhea" id="RHEA-COMP:9752"/>
        <dbReference type="Rhea" id="RHEA-COMP:13826"/>
        <dbReference type="ChEBI" id="CHEBI:15378"/>
        <dbReference type="ChEBI" id="CHEBI:29969"/>
        <dbReference type="ChEBI" id="CHEBI:57856"/>
        <dbReference type="ChEBI" id="CHEBI:59789"/>
        <dbReference type="ChEBI" id="CHEBI:61961"/>
    </reaction>
</comment>
<comment type="subcellular location">
    <subcellularLocation>
        <location evidence="1">Cytoplasm</location>
    </subcellularLocation>
</comment>
<comment type="similarity">
    <text evidence="1">Belongs to the methyltransferase superfamily. PrmA family.</text>
</comment>
<evidence type="ECO:0000255" key="1">
    <source>
        <dbReference type="HAMAP-Rule" id="MF_00735"/>
    </source>
</evidence>
<organism>
    <name type="scientific">Teredinibacter turnerae (strain ATCC 39867 / T7901)</name>
    <dbReference type="NCBI Taxonomy" id="377629"/>
    <lineage>
        <taxon>Bacteria</taxon>
        <taxon>Pseudomonadati</taxon>
        <taxon>Pseudomonadota</taxon>
        <taxon>Gammaproteobacteria</taxon>
        <taxon>Cellvibrionales</taxon>
        <taxon>Cellvibrionaceae</taxon>
        <taxon>Teredinibacter</taxon>
    </lineage>
</organism>
<name>PRMA_TERTT</name>
<keyword id="KW-0963">Cytoplasm</keyword>
<keyword id="KW-0489">Methyltransferase</keyword>
<keyword id="KW-1185">Reference proteome</keyword>
<keyword id="KW-0949">S-adenosyl-L-methionine</keyword>
<keyword id="KW-0808">Transferase</keyword>
<feature type="chain" id="PRO_1000212759" description="Ribosomal protein L11 methyltransferase">
    <location>
        <begin position="1"/>
        <end position="299"/>
    </location>
</feature>
<feature type="binding site" evidence="1">
    <location>
        <position position="144"/>
    </location>
    <ligand>
        <name>S-adenosyl-L-methionine</name>
        <dbReference type="ChEBI" id="CHEBI:59789"/>
    </ligand>
</feature>
<feature type="binding site" evidence="1">
    <location>
        <position position="165"/>
    </location>
    <ligand>
        <name>S-adenosyl-L-methionine</name>
        <dbReference type="ChEBI" id="CHEBI:59789"/>
    </ligand>
</feature>
<feature type="binding site" evidence="1">
    <location>
        <position position="187"/>
    </location>
    <ligand>
        <name>S-adenosyl-L-methionine</name>
        <dbReference type="ChEBI" id="CHEBI:59789"/>
    </ligand>
</feature>
<feature type="binding site" evidence="1">
    <location>
        <position position="229"/>
    </location>
    <ligand>
        <name>S-adenosyl-L-methionine</name>
        <dbReference type="ChEBI" id="CHEBI:59789"/>
    </ligand>
</feature>